<dbReference type="EMBL" id="AE017126">
    <property type="protein sequence ID" value="AAQ00298.1"/>
    <property type="molecule type" value="Genomic_DNA"/>
</dbReference>
<dbReference type="RefSeq" id="NP_875645.1">
    <property type="nucleotide sequence ID" value="NC_005042.1"/>
</dbReference>
<dbReference type="RefSeq" id="WP_011125405.1">
    <property type="nucleotide sequence ID" value="NC_005042.1"/>
</dbReference>
<dbReference type="STRING" id="167539.Pro_1253"/>
<dbReference type="EnsemblBacteria" id="AAQ00298">
    <property type="protein sequence ID" value="AAQ00298"/>
    <property type="gene ID" value="Pro_1253"/>
</dbReference>
<dbReference type="KEGG" id="pma:Pro_1253"/>
<dbReference type="PATRIC" id="fig|167539.5.peg.1315"/>
<dbReference type="eggNOG" id="ENOG502Z7YX">
    <property type="taxonomic scope" value="Bacteria"/>
</dbReference>
<dbReference type="HOGENOM" id="CLU_095465_0_0_3"/>
<dbReference type="OrthoDB" id="7059574at2"/>
<dbReference type="Proteomes" id="UP000001420">
    <property type="component" value="Chromosome"/>
</dbReference>
<dbReference type="GO" id="GO:0009522">
    <property type="term" value="C:photosystem I"/>
    <property type="evidence" value="ECO:0007669"/>
    <property type="project" value="InterPro"/>
</dbReference>
<dbReference type="GO" id="GO:0031676">
    <property type="term" value="C:plasma membrane-derived thylakoid membrane"/>
    <property type="evidence" value="ECO:0007669"/>
    <property type="project" value="UniProtKB-SubCell"/>
</dbReference>
<dbReference type="GO" id="GO:0015979">
    <property type="term" value="P:photosynthesis"/>
    <property type="evidence" value="ECO:0007669"/>
    <property type="project" value="UniProtKB-UniRule"/>
</dbReference>
<dbReference type="HAMAP" id="MF_00437">
    <property type="entry name" value="Ycf4"/>
    <property type="match status" value="1"/>
</dbReference>
<dbReference type="InterPro" id="IPR003359">
    <property type="entry name" value="PSI_Ycf4_assembly"/>
</dbReference>
<dbReference type="NCBIfam" id="NF002712">
    <property type="entry name" value="PRK02542.1"/>
    <property type="match status" value="1"/>
</dbReference>
<dbReference type="Pfam" id="PF02392">
    <property type="entry name" value="Ycf4"/>
    <property type="match status" value="1"/>
</dbReference>
<reference key="1">
    <citation type="journal article" date="2003" name="Proc. Natl. Acad. Sci. U.S.A.">
        <title>Genome sequence of the cyanobacterium Prochlorococcus marinus SS120, a nearly minimal oxyphototrophic genome.</title>
        <authorList>
            <person name="Dufresne A."/>
            <person name="Salanoubat M."/>
            <person name="Partensky F."/>
            <person name="Artiguenave F."/>
            <person name="Axmann I.M."/>
            <person name="Barbe V."/>
            <person name="Duprat S."/>
            <person name="Galperin M.Y."/>
            <person name="Koonin E.V."/>
            <person name="Le Gall F."/>
            <person name="Makarova K.S."/>
            <person name="Ostrowski M."/>
            <person name="Oztas S."/>
            <person name="Robert C."/>
            <person name="Rogozin I.B."/>
            <person name="Scanlan D.J."/>
            <person name="Tandeau de Marsac N."/>
            <person name="Weissenbach J."/>
            <person name="Wincker P."/>
            <person name="Wolf Y.I."/>
            <person name="Hess W.R."/>
        </authorList>
    </citation>
    <scope>NUCLEOTIDE SEQUENCE [LARGE SCALE GENOMIC DNA]</scope>
    <source>
        <strain>SARG / CCMP1375 / SS120</strain>
    </source>
</reference>
<accession>Q7VB45</accession>
<name>YCF4_PROMA</name>
<gene>
    <name type="primary">ycf4</name>
    <name type="ordered locus">Pro_1253</name>
</gene>
<evidence type="ECO:0000250" key="1"/>
<evidence type="ECO:0000255" key="2"/>
<evidence type="ECO:0000305" key="3"/>
<sequence>MSADFKEASSPTDSSETLLEQIVKGSRKTSNYIVASMLAVGGIGFSLASLSSYFGIDLLPLGNPSTLIFVPQGLFMGFYGIAATFISVYLWALIKVDYGSGLNRFDKNKGVLSVSRKGLLKEILVEIPIDDIQAVKLEVREGFNPRRRITLRLQGRRDLPISEVGGPQPLLSLEQEGAEIARFLKVNLEGLSN</sequence>
<keyword id="KW-0472">Membrane</keyword>
<keyword id="KW-0602">Photosynthesis</keyword>
<keyword id="KW-1185">Reference proteome</keyword>
<keyword id="KW-0793">Thylakoid</keyword>
<keyword id="KW-0812">Transmembrane</keyword>
<keyword id="KW-1133">Transmembrane helix</keyword>
<feature type="chain" id="PRO_0000217634" description="Photosystem I assembly protein Ycf4">
    <location>
        <begin position="1"/>
        <end position="193"/>
    </location>
</feature>
<feature type="transmembrane region" description="Helical" evidence="2">
    <location>
        <begin position="32"/>
        <end position="54"/>
    </location>
</feature>
<feature type="transmembrane region" description="Helical" evidence="2">
    <location>
        <begin position="69"/>
        <end position="91"/>
    </location>
</feature>
<proteinExistence type="inferred from homology"/>
<protein>
    <recommendedName>
        <fullName>Photosystem I assembly protein Ycf4</fullName>
    </recommendedName>
</protein>
<comment type="function">
    <text evidence="1">Seems to be required for the assembly of the photosystem I complex.</text>
</comment>
<comment type="subcellular location">
    <subcellularLocation>
        <location evidence="1">Cellular thylakoid membrane</location>
        <topology evidence="1">Multi-pass membrane protein</topology>
    </subcellularLocation>
</comment>
<comment type="similarity">
    <text evidence="3">Belongs to the Ycf4 family.</text>
</comment>
<organism>
    <name type="scientific">Prochlorococcus marinus (strain SARG / CCMP1375 / SS120)</name>
    <dbReference type="NCBI Taxonomy" id="167539"/>
    <lineage>
        <taxon>Bacteria</taxon>
        <taxon>Bacillati</taxon>
        <taxon>Cyanobacteriota</taxon>
        <taxon>Cyanophyceae</taxon>
        <taxon>Synechococcales</taxon>
        <taxon>Prochlorococcaceae</taxon>
        <taxon>Prochlorococcus</taxon>
    </lineage>
</organism>